<sequence>MASTSTSTQPSGWRHTASQYAALTKPRVTQLAVFCAVIGMFLATPGMVPWPVLIGGAVGIWLFAGAAFAINCLVERKIDAMMRRTAWRPSASGELGARQILLFSLVLGGAGMWTLHVFANDLTMWLTFATFIGYAIIYTLLLKPATPQNIVIGGLSGAMPPALGWAAVANSVPAEAWILVLIIFTWTPPHFWALALYRRADYAKSGLPMLPITHGEKFTLLHILLYTLIMVAATILPFVHGMSGYLYLAVALVLGFGFLVHAWRMYRNYSDALAQKTFRYSIVYLSLLFAALLIDHYFKFGPQGAAL</sequence>
<gene>
    <name evidence="1" type="primary">ctaB</name>
    <name type="ordered locus">RSc0372</name>
</gene>
<reference key="1">
    <citation type="journal article" date="2002" name="Nature">
        <title>Genome sequence of the plant pathogen Ralstonia solanacearum.</title>
        <authorList>
            <person name="Salanoubat M."/>
            <person name="Genin S."/>
            <person name="Artiguenave F."/>
            <person name="Gouzy J."/>
            <person name="Mangenot S."/>
            <person name="Arlat M."/>
            <person name="Billault A."/>
            <person name="Brottier P."/>
            <person name="Camus J.-C."/>
            <person name="Cattolico L."/>
            <person name="Chandler M."/>
            <person name="Choisne N."/>
            <person name="Claudel-Renard C."/>
            <person name="Cunnac S."/>
            <person name="Demange N."/>
            <person name="Gaspin C."/>
            <person name="Lavie M."/>
            <person name="Moisan A."/>
            <person name="Robert C."/>
            <person name="Saurin W."/>
            <person name="Schiex T."/>
            <person name="Siguier P."/>
            <person name="Thebault P."/>
            <person name="Whalen M."/>
            <person name="Wincker P."/>
            <person name="Levy M."/>
            <person name="Weissenbach J."/>
            <person name="Boucher C.A."/>
        </authorList>
    </citation>
    <scope>NUCLEOTIDE SEQUENCE [LARGE SCALE GENOMIC DNA]</scope>
    <source>
        <strain>ATCC BAA-1114 / GMI1000</strain>
    </source>
</reference>
<accession>Q8Y2G4</accession>
<protein>
    <recommendedName>
        <fullName evidence="1">Protoheme IX farnesyltransferase</fullName>
        <ecNumber evidence="1">2.5.1.141</ecNumber>
    </recommendedName>
    <alternativeName>
        <fullName evidence="1">Heme B farnesyltransferase</fullName>
    </alternativeName>
    <alternativeName>
        <fullName evidence="1">Heme O synthase</fullName>
    </alternativeName>
</protein>
<keyword id="KW-0997">Cell inner membrane</keyword>
<keyword id="KW-1003">Cell membrane</keyword>
<keyword id="KW-0350">Heme biosynthesis</keyword>
<keyword id="KW-0472">Membrane</keyword>
<keyword id="KW-1185">Reference proteome</keyword>
<keyword id="KW-0808">Transferase</keyword>
<keyword id="KW-0812">Transmembrane</keyword>
<keyword id="KW-1133">Transmembrane helix</keyword>
<organism>
    <name type="scientific">Ralstonia nicotianae (strain ATCC BAA-1114 / GMI1000)</name>
    <name type="common">Ralstonia solanacearum</name>
    <dbReference type="NCBI Taxonomy" id="267608"/>
    <lineage>
        <taxon>Bacteria</taxon>
        <taxon>Pseudomonadati</taxon>
        <taxon>Pseudomonadota</taxon>
        <taxon>Betaproteobacteria</taxon>
        <taxon>Burkholderiales</taxon>
        <taxon>Burkholderiaceae</taxon>
        <taxon>Ralstonia</taxon>
        <taxon>Ralstonia solanacearum species complex</taxon>
    </lineage>
</organism>
<comment type="function">
    <text evidence="1">Converts heme B (protoheme IX) to heme O by substitution of the vinyl group on carbon 2 of heme B porphyrin ring with a hydroxyethyl farnesyl side group.</text>
</comment>
<comment type="catalytic activity">
    <reaction evidence="1">
        <text>heme b + (2E,6E)-farnesyl diphosphate + H2O = Fe(II)-heme o + diphosphate</text>
        <dbReference type="Rhea" id="RHEA:28070"/>
        <dbReference type="ChEBI" id="CHEBI:15377"/>
        <dbReference type="ChEBI" id="CHEBI:33019"/>
        <dbReference type="ChEBI" id="CHEBI:60344"/>
        <dbReference type="ChEBI" id="CHEBI:60530"/>
        <dbReference type="ChEBI" id="CHEBI:175763"/>
        <dbReference type="EC" id="2.5.1.141"/>
    </reaction>
</comment>
<comment type="pathway">
    <text evidence="1">Porphyrin-containing compound metabolism; heme O biosynthesis; heme O from protoheme: step 1/1.</text>
</comment>
<comment type="subcellular location">
    <subcellularLocation>
        <location evidence="1">Cell inner membrane</location>
        <topology evidence="1">Multi-pass membrane protein</topology>
    </subcellularLocation>
</comment>
<comment type="miscellaneous">
    <text evidence="1">Carbon 2 of the heme B porphyrin ring is defined according to the Fischer nomenclature.</text>
</comment>
<comment type="similarity">
    <text evidence="1">Belongs to the UbiA prenyltransferase family. Protoheme IX farnesyltransferase subfamily.</text>
</comment>
<comment type="sequence caution" evidence="2">
    <conflict type="erroneous initiation">
        <sequence resource="EMBL-CDS" id="CAD13900"/>
    </conflict>
</comment>
<evidence type="ECO:0000255" key="1">
    <source>
        <dbReference type="HAMAP-Rule" id="MF_00154"/>
    </source>
</evidence>
<evidence type="ECO:0000305" key="2"/>
<feature type="chain" id="PRO_0000327128" description="Protoheme IX farnesyltransferase">
    <location>
        <begin position="1"/>
        <end position="307"/>
    </location>
</feature>
<feature type="transmembrane region" description="Helical" evidence="1">
    <location>
        <begin position="28"/>
        <end position="48"/>
    </location>
</feature>
<feature type="transmembrane region" description="Helical" evidence="1">
    <location>
        <begin position="50"/>
        <end position="70"/>
    </location>
</feature>
<feature type="transmembrane region" description="Helical" evidence="1">
    <location>
        <begin position="100"/>
        <end position="120"/>
    </location>
</feature>
<feature type="transmembrane region" description="Helical" evidence="1">
    <location>
        <begin position="122"/>
        <end position="142"/>
    </location>
</feature>
<feature type="transmembrane region" description="Helical" evidence="1">
    <location>
        <begin position="149"/>
        <end position="169"/>
    </location>
</feature>
<feature type="transmembrane region" description="Helical" evidence="1">
    <location>
        <begin position="176"/>
        <end position="196"/>
    </location>
</feature>
<feature type="transmembrane region" description="Helical" evidence="1">
    <location>
        <begin position="218"/>
        <end position="238"/>
    </location>
</feature>
<feature type="transmembrane region" description="Helical" evidence="1">
    <location>
        <begin position="243"/>
        <end position="263"/>
    </location>
</feature>
<feature type="transmembrane region" description="Helical" evidence="1">
    <location>
        <begin position="282"/>
        <end position="302"/>
    </location>
</feature>
<name>COXX_RALN1</name>
<dbReference type="EC" id="2.5.1.141" evidence="1"/>
<dbReference type="EMBL" id="AL646052">
    <property type="protein sequence ID" value="CAD13900.1"/>
    <property type="status" value="ALT_INIT"/>
    <property type="molecule type" value="Genomic_DNA"/>
</dbReference>
<dbReference type="SMR" id="Q8Y2G4"/>
<dbReference type="STRING" id="267608.RSc0372"/>
<dbReference type="EnsemblBacteria" id="CAD13900">
    <property type="protein sequence ID" value="CAD13900"/>
    <property type="gene ID" value="RSc0372"/>
</dbReference>
<dbReference type="KEGG" id="rso:RSc0372"/>
<dbReference type="eggNOG" id="COG0109">
    <property type="taxonomic scope" value="Bacteria"/>
</dbReference>
<dbReference type="HOGENOM" id="CLU_029631_0_2_4"/>
<dbReference type="UniPathway" id="UPA00834">
    <property type="reaction ID" value="UER00712"/>
</dbReference>
<dbReference type="Proteomes" id="UP000001436">
    <property type="component" value="Chromosome"/>
</dbReference>
<dbReference type="GO" id="GO:0005886">
    <property type="term" value="C:plasma membrane"/>
    <property type="evidence" value="ECO:0007669"/>
    <property type="project" value="UniProtKB-SubCell"/>
</dbReference>
<dbReference type="GO" id="GO:0008495">
    <property type="term" value="F:protoheme IX farnesyltransferase activity"/>
    <property type="evidence" value="ECO:0007669"/>
    <property type="project" value="UniProtKB-UniRule"/>
</dbReference>
<dbReference type="GO" id="GO:0048034">
    <property type="term" value="P:heme O biosynthetic process"/>
    <property type="evidence" value="ECO:0007669"/>
    <property type="project" value="UniProtKB-UniRule"/>
</dbReference>
<dbReference type="CDD" id="cd13957">
    <property type="entry name" value="PT_UbiA_Cox10"/>
    <property type="match status" value="1"/>
</dbReference>
<dbReference type="Gene3D" id="1.10.357.140">
    <property type="entry name" value="UbiA prenyltransferase"/>
    <property type="match status" value="1"/>
</dbReference>
<dbReference type="HAMAP" id="MF_00154">
    <property type="entry name" value="CyoE_CtaB"/>
    <property type="match status" value="1"/>
</dbReference>
<dbReference type="InterPro" id="IPR006369">
    <property type="entry name" value="Protohaem_IX_farnesylTrfase"/>
</dbReference>
<dbReference type="InterPro" id="IPR000537">
    <property type="entry name" value="UbiA_prenyltransferase"/>
</dbReference>
<dbReference type="InterPro" id="IPR030470">
    <property type="entry name" value="UbiA_prenylTrfase_CS"/>
</dbReference>
<dbReference type="InterPro" id="IPR044878">
    <property type="entry name" value="UbiA_sf"/>
</dbReference>
<dbReference type="NCBIfam" id="TIGR01473">
    <property type="entry name" value="cyoE_ctaB"/>
    <property type="match status" value="1"/>
</dbReference>
<dbReference type="NCBIfam" id="NF003349">
    <property type="entry name" value="PRK04375.1-2"/>
    <property type="match status" value="1"/>
</dbReference>
<dbReference type="PANTHER" id="PTHR43448:SF7">
    <property type="entry name" value="4-HYDROXYBENZOATE SOLANESYLTRANSFERASE"/>
    <property type="match status" value="1"/>
</dbReference>
<dbReference type="PANTHER" id="PTHR43448">
    <property type="entry name" value="PROTOHEME IX FARNESYLTRANSFERASE, MITOCHONDRIAL"/>
    <property type="match status" value="1"/>
</dbReference>
<dbReference type="Pfam" id="PF01040">
    <property type="entry name" value="UbiA"/>
    <property type="match status" value="1"/>
</dbReference>
<dbReference type="PROSITE" id="PS00943">
    <property type="entry name" value="UBIA"/>
    <property type="match status" value="1"/>
</dbReference>
<proteinExistence type="inferred from homology"/>